<reference key="1">
    <citation type="journal article" date="2004" name="Nature">
        <title>Genome evolution in yeasts.</title>
        <authorList>
            <person name="Dujon B."/>
            <person name="Sherman D."/>
            <person name="Fischer G."/>
            <person name="Durrens P."/>
            <person name="Casaregola S."/>
            <person name="Lafontaine I."/>
            <person name="de Montigny J."/>
            <person name="Marck C."/>
            <person name="Neuveglise C."/>
            <person name="Talla E."/>
            <person name="Goffard N."/>
            <person name="Frangeul L."/>
            <person name="Aigle M."/>
            <person name="Anthouard V."/>
            <person name="Babour A."/>
            <person name="Barbe V."/>
            <person name="Barnay S."/>
            <person name="Blanchin S."/>
            <person name="Beckerich J.-M."/>
            <person name="Beyne E."/>
            <person name="Bleykasten C."/>
            <person name="Boisrame A."/>
            <person name="Boyer J."/>
            <person name="Cattolico L."/>
            <person name="Confanioleri F."/>
            <person name="de Daruvar A."/>
            <person name="Despons L."/>
            <person name="Fabre E."/>
            <person name="Fairhead C."/>
            <person name="Ferry-Dumazet H."/>
            <person name="Groppi A."/>
            <person name="Hantraye F."/>
            <person name="Hennequin C."/>
            <person name="Jauniaux N."/>
            <person name="Joyet P."/>
            <person name="Kachouri R."/>
            <person name="Kerrest A."/>
            <person name="Koszul R."/>
            <person name="Lemaire M."/>
            <person name="Lesur I."/>
            <person name="Ma L."/>
            <person name="Muller H."/>
            <person name="Nicaud J.-M."/>
            <person name="Nikolski M."/>
            <person name="Oztas S."/>
            <person name="Ozier-Kalogeropoulos O."/>
            <person name="Pellenz S."/>
            <person name="Potier S."/>
            <person name="Richard G.-F."/>
            <person name="Straub M.-L."/>
            <person name="Suleau A."/>
            <person name="Swennen D."/>
            <person name="Tekaia F."/>
            <person name="Wesolowski-Louvel M."/>
            <person name="Westhof E."/>
            <person name="Wirth B."/>
            <person name="Zeniou-Meyer M."/>
            <person name="Zivanovic Y."/>
            <person name="Bolotin-Fukuhara M."/>
            <person name="Thierry A."/>
            <person name="Bouchier C."/>
            <person name="Caudron B."/>
            <person name="Scarpelli C."/>
            <person name="Gaillardin C."/>
            <person name="Weissenbach J."/>
            <person name="Wincker P."/>
            <person name="Souciet J.-L."/>
        </authorList>
    </citation>
    <scope>NUCLEOTIDE SEQUENCE [LARGE SCALE GENOMIC DNA]</scope>
    <source>
        <strain>ATCC 36239 / CBS 767 / BCRC 21394 / JCM 1990 / NBRC 0083 / IGC 2968</strain>
    </source>
</reference>
<proteinExistence type="inferred from homology"/>
<evidence type="ECO:0000250" key="1"/>
<evidence type="ECO:0000256" key="2">
    <source>
        <dbReference type="SAM" id="MobiDB-lite"/>
    </source>
</evidence>
<evidence type="ECO:0000305" key="3"/>
<gene>
    <name type="primary">SEC24</name>
    <name type="ordered locus">DEHA2D02838g</name>
</gene>
<keyword id="KW-0963">Cytoplasm</keyword>
<keyword id="KW-0968">Cytoplasmic vesicle</keyword>
<keyword id="KW-0256">Endoplasmic reticulum</keyword>
<keyword id="KW-0931">ER-Golgi transport</keyword>
<keyword id="KW-0333">Golgi apparatus</keyword>
<keyword id="KW-0472">Membrane</keyword>
<keyword id="KW-0479">Metal-binding</keyword>
<keyword id="KW-0653">Protein transport</keyword>
<keyword id="KW-1185">Reference proteome</keyword>
<keyword id="KW-0813">Transport</keyword>
<keyword id="KW-0862">Zinc</keyword>
<comment type="function">
    <text evidence="1">Component of the coat protein complex II (COPII) which promotes the formation of transport vesicles from the endoplasmic reticulum (ER). The coat has two main functions, the physical deformation of the endoplasmic reticulum membrane into vesicles and the selection of cargo molecules (By similarity).</text>
</comment>
<comment type="subunit">
    <text evidence="1">The COPII coat is composed of at least 5 proteins: the SEC23/24 complex, the SEC13/31 complex, and the protein SAR1. Golgi apparatus membrane; Peripheral membrane protein; Cytoplasmic side.</text>
</comment>
<comment type="subcellular location">
    <subcellularLocation>
        <location evidence="1">Cytoplasm</location>
    </subcellularLocation>
    <subcellularLocation>
        <location evidence="1">Cytoplasmic vesicle</location>
        <location evidence="1">COPII-coated vesicle membrane</location>
        <topology evidence="1">Peripheral membrane protein</topology>
        <orientation evidence="1">Cytoplasmic side</orientation>
    </subcellularLocation>
    <subcellularLocation>
        <location evidence="1">Endoplasmic reticulum membrane</location>
        <topology evidence="1">Peripheral membrane protein</topology>
        <orientation evidence="1">Cytoplasmic side</orientation>
    </subcellularLocation>
    <subcellularLocation>
        <location evidence="1">Golgi apparatus membrane</location>
        <topology evidence="1">Peripheral membrane protein</topology>
        <orientation evidence="1">Cytoplasmic side</orientation>
    </subcellularLocation>
</comment>
<comment type="similarity">
    <text evidence="3">Belongs to the SEC23/SEC24 family. SEC24 subfamily.</text>
</comment>
<accession>Q6BT80</accession>
<name>SEC24_DEBHA</name>
<organism>
    <name type="scientific">Debaryomyces hansenii (strain ATCC 36239 / CBS 767 / BCRC 21394 / JCM 1990 / NBRC 0083 / IGC 2968)</name>
    <name type="common">Yeast</name>
    <name type="synonym">Torulaspora hansenii</name>
    <dbReference type="NCBI Taxonomy" id="284592"/>
    <lineage>
        <taxon>Eukaryota</taxon>
        <taxon>Fungi</taxon>
        <taxon>Dikarya</taxon>
        <taxon>Ascomycota</taxon>
        <taxon>Saccharomycotina</taxon>
        <taxon>Pichiomycetes</taxon>
        <taxon>Debaryomycetaceae</taxon>
        <taxon>Debaryomyces</taxon>
    </lineage>
</organism>
<feature type="chain" id="PRO_0000295487" description="Protein transport protein SEC24">
    <location>
        <begin position="1"/>
        <end position="924"/>
    </location>
</feature>
<feature type="region of interest" description="Disordered" evidence="2">
    <location>
        <begin position="1"/>
        <end position="50"/>
    </location>
</feature>
<feature type="region of interest" description="Disordered" evidence="2">
    <location>
        <begin position="67"/>
        <end position="107"/>
    </location>
</feature>
<feature type="region of interest" description="Zinc finger-like">
    <location>
        <begin position="224"/>
        <end position="249"/>
    </location>
</feature>
<feature type="compositionally biased region" description="Low complexity" evidence="2">
    <location>
        <begin position="8"/>
        <end position="50"/>
    </location>
</feature>
<feature type="compositionally biased region" description="Low complexity" evidence="2">
    <location>
        <begin position="89"/>
        <end position="98"/>
    </location>
</feature>
<feature type="binding site" evidence="1">
    <location>
        <position position="224"/>
    </location>
    <ligand>
        <name>Zn(2+)</name>
        <dbReference type="ChEBI" id="CHEBI:29105"/>
    </ligand>
</feature>
<feature type="binding site" evidence="1">
    <location>
        <position position="227"/>
    </location>
    <ligand>
        <name>Zn(2+)</name>
        <dbReference type="ChEBI" id="CHEBI:29105"/>
    </ligand>
</feature>
<feature type="binding site" evidence="1">
    <location>
        <position position="246"/>
    </location>
    <ligand>
        <name>Zn(2+)</name>
        <dbReference type="ChEBI" id="CHEBI:29105"/>
    </ligand>
</feature>
<feature type="binding site" evidence="1">
    <location>
        <position position="249"/>
    </location>
    <ligand>
        <name>Zn(2+)</name>
        <dbReference type="ChEBI" id="CHEBI:29105"/>
    </ligand>
</feature>
<dbReference type="EMBL" id="CR382136">
    <property type="protein sequence ID" value="CAG86725.2"/>
    <property type="molecule type" value="Genomic_DNA"/>
</dbReference>
<dbReference type="RefSeq" id="XP_458590.2">
    <property type="nucleotide sequence ID" value="XM_458590.1"/>
</dbReference>
<dbReference type="SMR" id="Q6BT80"/>
<dbReference type="FunCoup" id="Q6BT80">
    <property type="interactions" value="908"/>
</dbReference>
<dbReference type="STRING" id="284592.Q6BT80"/>
<dbReference type="GeneID" id="2901563"/>
<dbReference type="KEGG" id="dha:DEHA2D02838g"/>
<dbReference type="VEuPathDB" id="FungiDB:DEHA2D02838g"/>
<dbReference type="eggNOG" id="KOG1985">
    <property type="taxonomic scope" value="Eukaryota"/>
</dbReference>
<dbReference type="HOGENOM" id="CLU_004589_2_1_1"/>
<dbReference type="InParanoid" id="Q6BT80"/>
<dbReference type="OMA" id="AVECSKQ"/>
<dbReference type="OrthoDB" id="49016at2759"/>
<dbReference type="Proteomes" id="UP000000599">
    <property type="component" value="Chromosome D"/>
</dbReference>
<dbReference type="GO" id="GO:0005801">
    <property type="term" value="C:cis-Golgi network"/>
    <property type="evidence" value="ECO:0007669"/>
    <property type="project" value="EnsemblFungi"/>
</dbReference>
<dbReference type="GO" id="GO:0030127">
    <property type="term" value="C:COPII vesicle coat"/>
    <property type="evidence" value="ECO:0007669"/>
    <property type="project" value="InterPro"/>
</dbReference>
<dbReference type="GO" id="GO:0070971">
    <property type="term" value="C:endoplasmic reticulum exit site"/>
    <property type="evidence" value="ECO:0007669"/>
    <property type="project" value="EnsemblFungi"/>
</dbReference>
<dbReference type="GO" id="GO:0005789">
    <property type="term" value="C:endoplasmic reticulum membrane"/>
    <property type="evidence" value="ECO:0007669"/>
    <property type="project" value="UniProtKB-SubCell"/>
</dbReference>
<dbReference type="GO" id="GO:1990753">
    <property type="term" value="C:equatorial cell cortex"/>
    <property type="evidence" value="ECO:0007669"/>
    <property type="project" value="EnsemblFungi"/>
</dbReference>
<dbReference type="GO" id="GO:0000139">
    <property type="term" value="C:Golgi membrane"/>
    <property type="evidence" value="ECO:0007669"/>
    <property type="project" value="UniProtKB-SubCell"/>
</dbReference>
<dbReference type="GO" id="GO:0000149">
    <property type="term" value="F:SNARE binding"/>
    <property type="evidence" value="ECO:0007669"/>
    <property type="project" value="TreeGrafter"/>
</dbReference>
<dbReference type="GO" id="GO:0008270">
    <property type="term" value="F:zinc ion binding"/>
    <property type="evidence" value="ECO:0007669"/>
    <property type="project" value="InterPro"/>
</dbReference>
<dbReference type="GO" id="GO:0090110">
    <property type="term" value="P:COPII-coated vesicle cargo loading"/>
    <property type="evidence" value="ECO:0007669"/>
    <property type="project" value="TreeGrafter"/>
</dbReference>
<dbReference type="GO" id="GO:0006886">
    <property type="term" value="P:intracellular protein transport"/>
    <property type="evidence" value="ECO:0007669"/>
    <property type="project" value="InterPro"/>
</dbReference>
<dbReference type="Gene3D" id="2.60.40.1670">
    <property type="entry name" value="beta-sandwich domain of Sec23/24"/>
    <property type="match status" value="1"/>
</dbReference>
<dbReference type="Gene3D" id="1.20.120.730">
    <property type="entry name" value="Sec23/Sec24 helical domain"/>
    <property type="match status" value="1"/>
</dbReference>
<dbReference type="Gene3D" id="3.40.20.10">
    <property type="entry name" value="Severin"/>
    <property type="match status" value="1"/>
</dbReference>
<dbReference type="Gene3D" id="3.40.50.410">
    <property type="entry name" value="von Willebrand factor, type A domain"/>
    <property type="match status" value="1"/>
</dbReference>
<dbReference type="Gene3D" id="2.30.30.380">
    <property type="entry name" value="Zn-finger domain of Sec23/24"/>
    <property type="match status" value="1"/>
</dbReference>
<dbReference type="InterPro" id="IPR029006">
    <property type="entry name" value="ADF-H/Gelsolin-like_dom_sf"/>
</dbReference>
<dbReference type="InterPro" id="IPR036180">
    <property type="entry name" value="Gelsolin-like_dom_sf"/>
</dbReference>
<dbReference type="InterPro" id="IPR006900">
    <property type="entry name" value="Sec23/24_helical_dom"/>
</dbReference>
<dbReference type="InterPro" id="IPR036175">
    <property type="entry name" value="Sec23/24_helical_dom_sf"/>
</dbReference>
<dbReference type="InterPro" id="IPR006896">
    <property type="entry name" value="Sec23/24_trunk_dom"/>
</dbReference>
<dbReference type="InterPro" id="IPR012990">
    <property type="entry name" value="Sec23_24_beta_S"/>
</dbReference>
<dbReference type="InterPro" id="IPR050550">
    <property type="entry name" value="SEC23_SEC24_subfamily"/>
</dbReference>
<dbReference type="InterPro" id="IPR036465">
    <property type="entry name" value="vWFA_dom_sf"/>
</dbReference>
<dbReference type="InterPro" id="IPR006895">
    <property type="entry name" value="Znf_Sec23_Sec24"/>
</dbReference>
<dbReference type="InterPro" id="IPR036174">
    <property type="entry name" value="Znf_Sec23_Sec24_sf"/>
</dbReference>
<dbReference type="PANTHER" id="PTHR13803">
    <property type="entry name" value="SEC24-RELATED PROTEIN"/>
    <property type="match status" value="1"/>
</dbReference>
<dbReference type="PANTHER" id="PTHR13803:SF39">
    <property type="entry name" value="SECRETORY 24AB, ISOFORM A"/>
    <property type="match status" value="1"/>
</dbReference>
<dbReference type="Pfam" id="PF08033">
    <property type="entry name" value="Sec23_BS"/>
    <property type="match status" value="1"/>
</dbReference>
<dbReference type="Pfam" id="PF04815">
    <property type="entry name" value="Sec23_helical"/>
    <property type="match status" value="1"/>
</dbReference>
<dbReference type="Pfam" id="PF04811">
    <property type="entry name" value="Sec23_trunk"/>
    <property type="match status" value="1"/>
</dbReference>
<dbReference type="Pfam" id="PF04810">
    <property type="entry name" value="zf-Sec23_Sec24"/>
    <property type="match status" value="1"/>
</dbReference>
<dbReference type="SUPFAM" id="SSF81995">
    <property type="entry name" value="beta-sandwich domain of Sec23/24"/>
    <property type="match status" value="1"/>
</dbReference>
<dbReference type="SUPFAM" id="SSF82754">
    <property type="entry name" value="C-terminal, gelsolin-like domain of Sec23/24"/>
    <property type="match status" value="1"/>
</dbReference>
<dbReference type="SUPFAM" id="SSF81811">
    <property type="entry name" value="Helical domain of Sec23/24"/>
    <property type="match status" value="1"/>
</dbReference>
<dbReference type="SUPFAM" id="SSF53300">
    <property type="entry name" value="vWA-like"/>
    <property type="match status" value="1"/>
</dbReference>
<dbReference type="SUPFAM" id="SSF82919">
    <property type="entry name" value="Zn-finger domain of Sec23/24"/>
    <property type="match status" value="1"/>
</dbReference>
<protein>
    <recommendedName>
        <fullName>Protein transport protein SEC24</fullName>
    </recommendedName>
</protein>
<sequence>MSSRRRAYPQPQYAATPAVPAADPQLQQFQPQQAQGQAQQAQGYGAGSPAYGVDQVNQQFQNMNVGGGVAGQPMANQYSGQYQPPPSQANPQAPYQAPGADSFGSQFAQHPQYAQPGMVGGAAALPLNQLYTTDLSRELPPSITDLSLPPPPIVLPANSVVVPTSEDSNAPPEYFRSTLNVLPANNSLLKKSKLPLALVVRPYNTLHIDSENIPVTSDTIISRCRRCRGYINPFVTLTEQGRRWRCNFCNLQNDIPSAFDYDELTGTAKNKFERVELNHSVVEFVAPKEYMARTPQPIVYTFIIDVSIDAVNSGLTSTITRTILESLDRIPNDNKTARVAFIGVDSNLHYFKFNEGLDGTDLLIVSDIDEPFLPSPDGLLINLNENRSTIEKLLIDFPTYFEGTANDRFALGPALRAGHKMISNIGGKLICFTATLPNIGEGKLTLRDEASHSGKPKESQMLLSNADKFYKSFAVECNSAQVTVDLFLTSAKYQDVASLANLPRFTAGQTHFYPAWSCAKAEDVTKLSREVSEHLSMDIALEAVLRVRGSTGIRMSSFYGNFFNRSSDLCSFPTFPRDQSYCIEMSIEETIHKSVVYFQAAVLHSTCFGERRIRVMNLAIPTSTKLDDIFASADQLAVANYFTHRSVEKAFSSSLPDARDYLVKSIVDILNVYKKELVAGNVSGSSPLQLSTNLRMLPLLLFSLTKHLALRQERVPSDHRAAALNLLSSLPIPHLIKYIYPTVYSLHNMGDECGLPEQIVQVDEETGEEETVNSTEILLPEPLNDTKASWENYGLYLIDNSTELFLWVSGDVVPGLVYDLFGTDNLYSVPTGKTELPEFSFEESEFNYKVRQIIGKIREQKDSVTWKNLYVVIGGSSNEPIEISQQRDLMALRMWALSCLVEDKTASEPGYREFLTSLKSKITQ</sequence>